<keyword id="KW-0025">Alternative splicing</keyword>
<keyword id="KW-1003">Cell membrane</keyword>
<keyword id="KW-0256">Endoplasmic reticulum</keyword>
<keyword id="KW-0967">Endosome</keyword>
<keyword id="KW-0936">Ethylene signaling pathway</keyword>
<keyword id="KW-0381">Hypersensitive response</keyword>
<keyword id="KW-0472">Membrane</keyword>
<keyword id="KW-0611">Plant defense</keyword>
<keyword id="KW-1185">Reference proteome</keyword>
<keyword id="KW-0812">Transmembrane</keyword>
<keyword id="KW-1133">Transmembrane helix</keyword>
<name>EDR2_ARATH</name>
<sequence>MSKVVYEGWMVRYGRRKIGRSYIHMRYFVLEPRLLAYYKKKPQDYQVPIKTMLIDGNCRVEDRGLKTHHGHMVYVLSVYNKKEKSHRITMAAFNIQEALMWKEKIESVIDQHQESQVPNGQQYVSFEYKSGMDTGRTASSSDHESQFSAAEDEEDSRRSLMRRTTIGNGPPESVLDWTKEFDAELANQNSDNQAFSRKHWRLLQCQNGLRIFEELLEVDYLPRSCSRAMKAVGVVEATCEEIFELLMSMDGTRYEWDCSFQFGSLVEEVDGHTAVLYHRLLLDWFPMIVWPRDLCYVRYWRRNDDGSYVVLFRSREHENCGPQPGCVRAHLESGGYNISPLKPRNGRPRTQVQHLIQIDLKGWGAGYLPAFQQHCLLQMLNSVAGLREWFSQTDERGVHTRIPVMVNMASSSLSLTKSGKSLHKSAFSLDQTNSVNRNSLLMDEDSDDDDEFQIAESEQEPETSKPETDVKRPEEEPAHNIDLSCFSGNLKRNENENARNCWRISDGNNFKVRGKNFGQEKRKIPAGKHLMDLVAVDWFKDSKRIDHVARRKGCAAQVAAEKGLFSMVVNVQVPGSTHYSMVFYFVMKELVPGSLLQRFVDGDDEFRNSRLKLIPLVPKGSWIVRQSVGSTPCLLGKAVDCNYIRGPTYLEIDVDIGSSTVANGVLGLVIGVITSLVVEMAFLVQANTAEEQPERLIGAVRVSHIELSSAIVPNLESE</sequence>
<proteinExistence type="evidence at transcript level"/>
<protein>
    <recommendedName>
        <fullName>Protein ENHANCED DISEASE RESISTANCE 2</fullName>
    </recommendedName>
</protein>
<organism>
    <name type="scientific">Arabidopsis thaliana</name>
    <name type="common">Mouse-ear cress</name>
    <dbReference type="NCBI Taxonomy" id="3702"/>
    <lineage>
        <taxon>Eukaryota</taxon>
        <taxon>Viridiplantae</taxon>
        <taxon>Streptophyta</taxon>
        <taxon>Embryophyta</taxon>
        <taxon>Tracheophyta</taxon>
        <taxon>Spermatophyta</taxon>
        <taxon>Magnoliopsida</taxon>
        <taxon>eudicotyledons</taxon>
        <taxon>Gunneridae</taxon>
        <taxon>Pentapetalae</taxon>
        <taxon>rosids</taxon>
        <taxon>malvids</taxon>
        <taxon>Brassicales</taxon>
        <taxon>Brassicaceae</taxon>
        <taxon>Camelineae</taxon>
        <taxon>Arabidopsis</taxon>
    </lineage>
</organism>
<comment type="function">
    <text evidence="5 6">Negative regulator of the salicylic acid- (SA-) mediated resistance to pathogens, including the biotrophic powdery mildew pathogens Golovinomyces cichoracearum and Blumeria graminis, and the downy mildew pathogen Hyaloperonospora parasitica, probably by limiting the initiation of cell death and the establishment of the hypersensitive response (HR). Prevents ethylene-induced senescence. Binds to phosphatidylinositol-4-phosphate (PtdIns(4)P) in vitro.</text>
</comment>
<comment type="subcellular location">
    <subcellularLocation>
        <location evidence="6">Endoplasmic reticulum membrane</location>
        <topology evidence="6">Single-pass membrane protein</topology>
    </subcellularLocation>
    <subcellularLocation>
        <location evidence="6">Cell membrane</location>
        <topology evidence="6">Single-pass membrane protein</topology>
    </subcellularLocation>
    <subcellularLocation>
        <location evidence="6">Endosome membrane</location>
        <topology evidence="6">Single-pass membrane protein</topology>
    </subcellularLocation>
</comment>
<comment type="alternative products">
    <event type="alternative splicing"/>
    <isoform>
        <id>F4JSE7-1</id>
        <name>1</name>
        <sequence type="displayed"/>
    </isoform>
    <isoform>
        <id>F4JSE7-2</id>
        <name>2</name>
        <sequence type="described" ref="VSP_054322"/>
    </isoform>
    <isoform>
        <id>F4JSE7-3</id>
        <name>3</name>
        <sequence type="described" ref="VSP_054323 VSP_054324"/>
    </isoform>
</comment>
<comment type="tissue specificity">
    <text evidence="5">Expressed ubiquitously in all tissues and organs, including leaves, roots, flowers, stems and siliques.</text>
</comment>
<comment type="domain">
    <text>The pleckstrin homology domain (3-110) binds to phosphatidylinositol-4-phosphate (PtdIns(4)P).</text>
</comment>
<comment type="disruption phenotype">
    <text evidence="5 6">Enhanced disease resistance salicylic acid-(SA-) dependent to the biotrophic powdery mildew pathogen Erysiphe cichoracearum at a late stage of the infection process and characterized by the formation of necrotic lesions. Enhanced ethylene-induced senescence phenotype. In edr2-6, exaggerated chlorosis and necrosis response to attack by pathogens (e.g. Hyaloperonospora parasitica, Golovinomyces cichoracearum and Blumeria graminis), but not in response to abiotic stresses or attack by the bacterial pathogen Pseudomonas syringae, characterized by initiation of cell death at infection site and hyper sensitive response (HR).</text>
</comment>
<comment type="sequence caution" evidence="7">
    <conflict type="frameshift">
        <sequence resource="EMBL" id="AY090340"/>
    </conflict>
</comment>
<comment type="sequence caution" evidence="7">
    <conflict type="frameshift">
        <sequence resource="EMBL" id="BX827233"/>
    </conflict>
</comment>
<comment type="sequence caution" evidence="7">
    <conflict type="erroneous gene model prediction">
        <sequence resource="EMBL-CDS" id="CAA16761"/>
    </conflict>
</comment>
<comment type="sequence caution" evidence="7">
    <conflict type="erroneous gene model prediction">
        <sequence resource="EMBL-CDS" id="CAB78906"/>
    </conflict>
</comment>
<gene>
    <name type="primary">EDR2</name>
    <name type="ordered locus">At4g19040</name>
    <name type="ORF">F13C5.210</name>
</gene>
<dbReference type="EMBL" id="AL021711">
    <property type="protein sequence ID" value="CAA16761.1"/>
    <property type="status" value="ALT_SEQ"/>
    <property type="molecule type" value="Genomic_DNA"/>
</dbReference>
<dbReference type="EMBL" id="AL161550">
    <property type="protein sequence ID" value="CAB78906.1"/>
    <property type="status" value="ALT_SEQ"/>
    <property type="molecule type" value="Genomic_DNA"/>
</dbReference>
<dbReference type="EMBL" id="CP002687">
    <property type="protein sequence ID" value="AEE84130.1"/>
    <property type="molecule type" value="Genomic_DNA"/>
</dbReference>
<dbReference type="EMBL" id="CP002687">
    <property type="protein sequence ID" value="AEE84132.1"/>
    <property type="molecule type" value="Genomic_DNA"/>
</dbReference>
<dbReference type="EMBL" id="AY090340">
    <property type="status" value="NOT_ANNOTATED_CDS"/>
    <property type="molecule type" value="mRNA"/>
</dbReference>
<dbReference type="EMBL" id="BX827233">
    <property type="status" value="NOT_ANNOTATED_CDS"/>
    <property type="molecule type" value="mRNA"/>
</dbReference>
<dbReference type="EMBL" id="AK222155">
    <property type="protein sequence ID" value="BAD95241.1"/>
    <property type="molecule type" value="mRNA"/>
</dbReference>
<dbReference type="PIR" id="T05041">
    <property type="entry name" value="T05041"/>
</dbReference>
<dbReference type="RefSeq" id="NP_001190769.1">
    <molecule id="F4JSE7-3"/>
    <property type="nucleotide sequence ID" value="NM_001203840.1"/>
</dbReference>
<dbReference type="RefSeq" id="NP_193639.2">
    <molecule id="F4JSE7-1"/>
    <property type="nucleotide sequence ID" value="NM_118022.5"/>
</dbReference>
<dbReference type="SMR" id="F4JSE7"/>
<dbReference type="FunCoup" id="F4JSE7">
    <property type="interactions" value="784"/>
</dbReference>
<dbReference type="STRING" id="3702.F4JSE7"/>
<dbReference type="iPTMnet" id="F4JSE7"/>
<dbReference type="PaxDb" id="3702-AT4G19040.2"/>
<dbReference type="ProteomicsDB" id="247073">
    <molecule id="F4JSE7-1"/>
</dbReference>
<dbReference type="EnsemblPlants" id="AT4G19040.1">
    <molecule id="F4JSE7-1"/>
    <property type="protein sequence ID" value="AT4G19040.1"/>
    <property type="gene ID" value="AT4G19040"/>
</dbReference>
<dbReference type="EnsemblPlants" id="AT4G19040.3">
    <molecule id="F4JSE7-3"/>
    <property type="protein sequence ID" value="AT4G19040.3"/>
    <property type="gene ID" value="AT4G19040"/>
</dbReference>
<dbReference type="GeneID" id="827642"/>
<dbReference type="Gramene" id="AT4G19040.1">
    <molecule id="F4JSE7-1"/>
    <property type="protein sequence ID" value="AT4G19040.1"/>
    <property type="gene ID" value="AT4G19040"/>
</dbReference>
<dbReference type="Gramene" id="AT4G19040.3">
    <molecule id="F4JSE7-3"/>
    <property type="protein sequence ID" value="AT4G19040.3"/>
    <property type="gene ID" value="AT4G19040"/>
</dbReference>
<dbReference type="KEGG" id="ath:AT4G19040"/>
<dbReference type="Araport" id="AT4G19040"/>
<dbReference type="TAIR" id="AT4G19040">
    <property type="gene designation" value="EDR2"/>
</dbReference>
<dbReference type="eggNOG" id="ENOG502QS0N">
    <property type="taxonomic scope" value="Eukaryota"/>
</dbReference>
<dbReference type="HOGENOM" id="CLU_018946_0_0_1"/>
<dbReference type="InParanoid" id="F4JSE7"/>
<dbReference type="PRO" id="PR:F4JSE7"/>
<dbReference type="Proteomes" id="UP000006548">
    <property type="component" value="Chromosome 4"/>
</dbReference>
<dbReference type="ExpressionAtlas" id="F4JSE7">
    <property type="expression patterns" value="baseline and differential"/>
</dbReference>
<dbReference type="GO" id="GO:0005789">
    <property type="term" value="C:endoplasmic reticulum membrane"/>
    <property type="evidence" value="ECO:0000314"/>
    <property type="project" value="UniProtKB"/>
</dbReference>
<dbReference type="GO" id="GO:0010008">
    <property type="term" value="C:endosome membrane"/>
    <property type="evidence" value="ECO:0000314"/>
    <property type="project" value="UniProtKB"/>
</dbReference>
<dbReference type="GO" id="GO:0005886">
    <property type="term" value="C:plasma membrane"/>
    <property type="evidence" value="ECO:0000314"/>
    <property type="project" value="UniProtKB"/>
</dbReference>
<dbReference type="GO" id="GO:0070273">
    <property type="term" value="F:phosphatidylinositol-4-phosphate binding"/>
    <property type="evidence" value="ECO:0000314"/>
    <property type="project" value="UniProtKB"/>
</dbReference>
<dbReference type="GO" id="GO:0009873">
    <property type="term" value="P:ethylene-activated signaling pathway"/>
    <property type="evidence" value="ECO:0007669"/>
    <property type="project" value="UniProtKB-KW"/>
</dbReference>
<dbReference type="GO" id="GO:1900056">
    <property type="term" value="P:negative regulation of leaf senescence"/>
    <property type="evidence" value="ECO:0000315"/>
    <property type="project" value="UniProtKB"/>
</dbReference>
<dbReference type="GO" id="GO:0009626">
    <property type="term" value="P:plant-type hypersensitive response"/>
    <property type="evidence" value="ECO:0007669"/>
    <property type="project" value="UniProtKB-KW"/>
</dbReference>
<dbReference type="GO" id="GO:1900150">
    <property type="term" value="P:regulation of defense response to fungus"/>
    <property type="evidence" value="ECO:0000315"/>
    <property type="project" value="UniProtKB"/>
</dbReference>
<dbReference type="GO" id="GO:0009723">
    <property type="term" value="P:response to ethylene"/>
    <property type="evidence" value="ECO:0000315"/>
    <property type="project" value="UniProtKB"/>
</dbReference>
<dbReference type="GO" id="GO:0009751">
    <property type="term" value="P:response to salicylic acid"/>
    <property type="evidence" value="ECO:0000315"/>
    <property type="project" value="UniProtKB"/>
</dbReference>
<dbReference type="CDD" id="cd00821">
    <property type="entry name" value="PH"/>
    <property type="match status" value="1"/>
</dbReference>
<dbReference type="CDD" id="cd00177">
    <property type="entry name" value="START"/>
    <property type="match status" value="1"/>
</dbReference>
<dbReference type="FunFam" id="3.30.530.20:FF:000035">
    <property type="entry name" value="ENHANCED DISEASE RESISTANCE 2"/>
    <property type="match status" value="1"/>
</dbReference>
<dbReference type="FunFam" id="2.30.29.30:FF:000359">
    <property type="entry name" value="Protein ENHANCED DISEASE RESISTANCE 2-like"/>
    <property type="match status" value="1"/>
</dbReference>
<dbReference type="Gene3D" id="3.30.530.20">
    <property type="match status" value="1"/>
</dbReference>
<dbReference type="Gene3D" id="2.30.29.30">
    <property type="entry name" value="Pleckstrin-homology domain (PH domain)/Phosphotyrosine-binding domain (PTB)"/>
    <property type="match status" value="1"/>
</dbReference>
<dbReference type="InterPro" id="IPR045096">
    <property type="entry name" value="EDR2-like"/>
</dbReference>
<dbReference type="InterPro" id="IPR009769">
    <property type="entry name" value="EDR2_C"/>
</dbReference>
<dbReference type="InterPro" id="IPR011993">
    <property type="entry name" value="PH-like_dom_sf"/>
</dbReference>
<dbReference type="InterPro" id="IPR001849">
    <property type="entry name" value="PH_domain"/>
</dbReference>
<dbReference type="InterPro" id="IPR023393">
    <property type="entry name" value="START-like_dom_sf"/>
</dbReference>
<dbReference type="InterPro" id="IPR002913">
    <property type="entry name" value="START_lipid-bd_dom"/>
</dbReference>
<dbReference type="PANTHER" id="PTHR12136">
    <property type="entry name" value="ENHANCED DISEASE RESISTANCE-RELATED"/>
    <property type="match status" value="1"/>
</dbReference>
<dbReference type="PANTHER" id="PTHR12136:SF111">
    <property type="entry name" value="PROTEIN ENHANCED DISEASE RESISTANCE 2"/>
    <property type="match status" value="1"/>
</dbReference>
<dbReference type="Pfam" id="PF07059">
    <property type="entry name" value="EDR2_C"/>
    <property type="match status" value="1"/>
</dbReference>
<dbReference type="Pfam" id="PF00169">
    <property type="entry name" value="PH"/>
    <property type="match status" value="1"/>
</dbReference>
<dbReference type="Pfam" id="PF01852">
    <property type="entry name" value="START"/>
    <property type="match status" value="1"/>
</dbReference>
<dbReference type="SMART" id="SM00233">
    <property type="entry name" value="PH"/>
    <property type="match status" value="1"/>
</dbReference>
<dbReference type="SMART" id="SM00234">
    <property type="entry name" value="START"/>
    <property type="match status" value="1"/>
</dbReference>
<dbReference type="SUPFAM" id="SSF55961">
    <property type="entry name" value="Bet v1-like"/>
    <property type="match status" value="1"/>
</dbReference>
<dbReference type="SUPFAM" id="SSF50729">
    <property type="entry name" value="PH domain-like"/>
    <property type="match status" value="1"/>
</dbReference>
<dbReference type="PROSITE" id="PS50003">
    <property type="entry name" value="PH_DOMAIN"/>
    <property type="match status" value="1"/>
</dbReference>
<dbReference type="PROSITE" id="PS50848">
    <property type="entry name" value="START"/>
    <property type="match status" value="1"/>
</dbReference>
<feature type="chain" id="PRO_0000428905" description="Protein ENHANCED DISEASE RESISTANCE 2">
    <location>
        <begin position="1"/>
        <end position="718"/>
    </location>
</feature>
<feature type="transmembrane region" description="Helical" evidence="1">
    <location>
        <begin position="664"/>
        <end position="684"/>
    </location>
</feature>
<feature type="domain" description="PH" evidence="2">
    <location>
        <begin position="3"/>
        <end position="110"/>
    </location>
</feature>
<feature type="domain" description="START" evidence="3">
    <location>
        <begin position="180"/>
        <end position="392"/>
    </location>
</feature>
<feature type="region of interest" description="Disordered" evidence="4">
    <location>
        <begin position="134"/>
        <end position="174"/>
    </location>
</feature>
<feature type="region of interest" description="Disordered" evidence="4">
    <location>
        <begin position="437"/>
        <end position="483"/>
    </location>
</feature>
<feature type="compositionally biased region" description="Acidic residues" evidence="4">
    <location>
        <begin position="442"/>
        <end position="461"/>
    </location>
</feature>
<feature type="compositionally biased region" description="Basic and acidic residues" evidence="4">
    <location>
        <begin position="462"/>
        <end position="479"/>
    </location>
</feature>
<feature type="splice variant" id="VSP_054322" description="In isoform 2." evidence="7">
    <original>Q</original>
    <variation>QSAISFR</variation>
    <location>
        <position position="146"/>
    </location>
</feature>
<feature type="splice variant" id="VSP_054323" description="In isoform 3." evidence="7">
    <location>
        <begin position="285"/>
        <end position="287"/>
    </location>
</feature>
<feature type="splice variant" id="VSP_054324" description="In isoform 3." evidence="7">
    <original>E</original>
    <variation>GVHPIK</variation>
    <location>
        <position position="474"/>
    </location>
</feature>
<reference key="1">
    <citation type="journal article" date="1999" name="Nature">
        <title>Sequence and analysis of chromosome 4 of the plant Arabidopsis thaliana.</title>
        <authorList>
            <person name="Mayer K.F.X."/>
            <person name="Schueller C."/>
            <person name="Wambutt R."/>
            <person name="Murphy G."/>
            <person name="Volckaert G."/>
            <person name="Pohl T."/>
            <person name="Duesterhoeft A."/>
            <person name="Stiekema W."/>
            <person name="Entian K.-D."/>
            <person name="Terryn N."/>
            <person name="Harris B."/>
            <person name="Ansorge W."/>
            <person name="Brandt P."/>
            <person name="Grivell L.A."/>
            <person name="Rieger M."/>
            <person name="Weichselgartner M."/>
            <person name="de Simone V."/>
            <person name="Obermaier B."/>
            <person name="Mache R."/>
            <person name="Mueller M."/>
            <person name="Kreis M."/>
            <person name="Delseny M."/>
            <person name="Puigdomenech P."/>
            <person name="Watson M."/>
            <person name="Schmidtheini T."/>
            <person name="Reichert B."/>
            <person name="Portetelle D."/>
            <person name="Perez-Alonso M."/>
            <person name="Boutry M."/>
            <person name="Bancroft I."/>
            <person name="Vos P."/>
            <person name="Hoheisel J."/>
            <person name="Zimmermann W."/>
            <person name="Wedler H."/>
            <person name="Ridley P."/>
            <person name="Langham S.-A."/>
            <person name="McCullagh B."/>
            <person name="Bilham L."/>
            <person name="Robben J."/>
            <person name="van der Schueren J."/>
            <person name="Grymonprez B."/>
            <person name="Chuang Y.-J."/>
            <person name="Vandenbussche F."/>
            <person name="Braeken M."/>
            <person name="Weltjens I."/>
            <person name="Voet M."/>
            <person name="Bastiaens I."/>
            <person name="Aert R."/>
            <person name="Defoor E."/>
            <person name="Weitzenegger T."/>
            <person name="Bothe G."/>
            <person name="Ramsperger U."/>
            <person name="Hilbert H."/>
            <person name="Braun M."/>
            <person name="Holzer E."/>
            <person name="Brandt A."/>
            <person name="Peters S."/>
            <person name="van Staveren M."/>
            <person name="Dirkse W."/>
            <person name="Mooijman P."/>
            <person name="Klein Lankhorst R."/>
            <person name="Rose M."/>
            <person name="Hauf J."/>
            <person name="Koetter P."/>
            <person name="Berneiser S."/>
            <person name="Hempel S."/>
            <person name="Feldpausch M."/>
            <person name="Lamberth S."/>
            <person name="Van den Daele H."/>
            <person name="De Keyser A."/>
            <person name="Buysshaert C."/>
            <person name="Gielen J."/>
            <person name="Villarroel R."/>
            <person name="De Clercq R."/>
            <person name="van Montagu M."/>
            <person name="Rogers J."/>
            <person name="Cronin A."/>
            <person name="Quail M.A."/>
            <person name="Bray-Allen S."/>
            <person name="Clark L."/>
            <person name="Doggett J."/>
            <person name="Hall S."/>
            <person name="Kay M."/>
            <person name="Lennard N."/>
            <person name="McLay K."/>
            <person name="Mayes R."/>
            <person name="Pettett A."/>
            <person name="Rajandream M.A."/>
            <person name="Lyne M."/>
            <person name="Benes V."/>
            <person name="Rechmann S."/>
            <person name="Borkova D."/>
            <person name="Bloecker H."/>
            <person name="Scharfe M."/>
            <person name="Grimm M."/>
            <person name="Loehnert T.-H."/>
            <person name="Dose S."/>
            <person name="de Haan M."/>
            <person name="Maarse A.C."/>
            <person name="Schaefer M."/>
            <person name="Mueller-Auer S."/>
            <person name="Gabel C."/>
            <person name="Fuchs M."/>
            <person name="Fartmann B."/>
            <person name="Granderath K."/>
            <person name="Dauner D."/>
            <person name="Herzl A."/>
            <person name="Neumann S."/>
            <person name="Argiriou A."/>
            <person name="Vitale D."/>
            <person name="Liguori R."/>
            <person name="Piravandi E."/>
            <person name="Massenet O."/>
            <person name="Quigley F."/>
            <person name="Clabauld G."/>
            <person name="Muendlein A."/>
            <person name="Felber R."/>
            <person name="Schnabl S."/>
            <person name="Hiller R."/>
            <person name="Schmidt W."/>
            <person name="Lecharny A."/>
            <person name="Aubourg S."/>
            <person name="Chefdor F."/>
            <person name="Cooke R."/>
            <person name="Berger C."/>
            <person name="Monfort A."/>
            <person name="Casacuberta E."/>
            <person name="Gibbons T."/>
            <person name="Weber N."/>
            <person name="Vandenbol M."/>
            <person name="Bargues M."/>
            <person name="Terol J."/>
            <person name="Torres A."/>
            <person name="Perez-Perez A."/>
            <person name="Purnelle B."/>
            <person name="Bent E."/>
            <person name="Johnson S."/>
            <person name="Tacon D."/>
            <person name="Jesse T."/>
            <person name="Heijnen L."/>
            <person name="Schwarz S."/>
            <person name="Scholler P."/>
            <person name="Heber S."/>
            <person name="Francs P."/>
            <person name="Bielke C."/>
            <person name="Frishman D."/>
            <person name="Haase D."/>
            <person name="Lemcke K."/>
            <person name="Mewes H.-W."/>
            <person name="Stocker S."/>
            <person name="Zaccaria P."/>
            <person name="Bevan M."/>
            <person name="Wilson R.K."/>
            <person name="de la Bastide M."/>
            <person name="Habermann K."/>
            <person name="Parnell L."/>
            <person name="Dedhia N."/>
            <person name="Gnoj L."/>
            <person name="Schutz K."/>
            <person name="Huang E."/>
            <person name="Spiegel L."/>
            <person name="Sekhon M."/>
            <person name="Murray J."/>
            <person name="Sheet P."/>
            <person name="Cordes M."/>
            <person name="Abu-Threideh J."/>
            <person name="Stoneking T."/>
            <person name="Kalicki J."/>
            <person name="Graves T."/>
            <person name="Harmon G."/>
            <person name="Edwards J."/>
            <person name="Latreille P."/>
            <person name="Courtney L."/>
            <person name="Cloud J."/>
            <person name="Abbott A."/>
            <person name="Scott K."/>
            <person name="Johnson D."/>
            <person name="Minx P."/>
            <person name="Bentley D."/>
            <person name="Fulton B."/>
            <person name="Miller N."/>
            <person name="Greco T."/>
            <person name="Kemp K."/>
            <person name="Kramer J."/>
            <person name="Fulton L."/>
            <person name="Mardis E."/>
            <person name="Dante M."/>
            <person name="Pepin K."/>
            <person name="Hillier L.W."/>
            <person name="Nelson J."/>
            <person name="Spieth J."/>
            <person name="Ryan E."/>
            <person name="Andrews S."/>
            <person name="Geisel C."/>
            <person name="Layman D."/>
            <person name="Du H."/>
            <person name="Ali J."/>
            <person name="Berghoff A."/>
            <person name="Jones K."/>
            <person name="Drone K."/>
            <person name="Cotton M."/>
            <person name="Joshu C."/>
            <person name="Antonoiu B."/>
            <person name="Zidanic M."/>
            <person name="Strong C."/>
            <person name="Sun H."/>
            <person name="Lamar B."/>
            <person name="Yordan C."/>
            <person name="Ma P."/>
            <person name="Zhong J."/>
            <person name="Preston R."/>
            <person name="Vil D."/>
            <person name="Shekher M."/>
            <person name="Matero A."/>
            <person name="Shah R."/>
            <person name="Swaby I.K."/>
            <person name="O'Shaughnessy A."/>
            <person name="Rodriguez M."/>
            <person name="Hoffman J."/>
            <person name="Till S."/>
            <person name="Granat S."/>
            <person name="Shohdy N."/>
            <person name="Hasegawa A."/>
            <person name="Hameed A."/>
            <person name="Lodhi M."/>
            <person name="Johnson A."/>
            <person name="Chen E."/>
            <person name="Marra M.A."/>
            <person name="Martienssen R."/>
            <person name="McCombie W.R."/>
        </authorList>
    </citation>
    <scope>NUCLEOTIDE SEQUENCE [LARGE SCALE GENOMIC DNA]</scope>
    <source>
        <strain>cv. Columbia</strain>
    </source>
</reference>
<reference key="2">
    <citation type="journal article" date="2017" name="Plant J.">
        <title>Araport11: a complete reannotation of the Arabidopsis thaliana reference genome.</title>
        <authorList>
            <person name="Cheng C.Y."/>
            <person name="Krishnakumar V."/>
            <person name="Chan A.P."/>
            <person name="Thibaud-Nissen F."/>
            <person name="Schobel S."/>
            <person name="Town C.D."/>
        </authorList>
    </citation>
    <scope>GENOME REANNOTATION</scope>
    <source>
        <strain>cv. Columbia</strain>
    </source>
</reference>
<reference key="3">
    <citation type="journal article" date="2003" name="Science">
        <title>Empirical analysis of transcriptional activity in the Arabidopsis genome.</title>
        <authorList>
            <person name="Yamada K."/>
            <person name="Lim J."/>
            <person name="Dale J.M."/>
            <person name="Chen H."/>
            <person name="Shinn P."/>
            <person name="Palm C.J."/>
            <person name="Southwick A.M."/>
            <person name="Wu H.C."/>
            <person name="Kim C.J."/>
            <person name="Nguyen M."/>
            <person name="Pham P.K."/>
            <person name="Cheuk R.F."/>
            <person name="Karlin-Newmann G."/>
            <person name="Liu S.X."/>
            <person name="Lam B."/>
            <person name="Sakano H."/>
            <person name="Wu T."/>
            <person name="Yu G."/>
            <person name="Miranda M."/>
            <person name="Quach H.L."/>
            <person name="Tripp M."/>
            <person name="Chang C.H."/>
            <person name="Lee J.M."/>
            <person name="Toriumi M.J."/>
            <person name="Chan M.M."/>
            <person name="Tang C.C."/>
            <person name="Onodera C.S."/>
            <person name="Deng J.M."/>
            <person name="Akiyama K."/>
            <person name="Ansari Y."/>
            <person name="Arakawa T."/>
            <person name="Banh J."/>
            <person name="Banno F."/>
            <person name="Bowser L."/>
            <person name="Brooks S.Y."/>
            <person name="Carninci P."/>
            <person name="Chao Q."/>
            <person name="Choy N."/>
            <person name="Enju A."/>
            <person name="Goldsmith A.D."/>
            <person name="Gurjal M."/>
            <person name="Hansen N.F."/>
            <person name="Hayashizaki Y."/>
            <person name="Johnson-Hopson C."/>
            <person name="Hsuan V.W."/>
            <person name="Iida K."/>
            <person name="Karnes M."/>
            <person name="Khan S."/>
            <person name="Koesema E."/>
            <person name="Ishida J."/>
            <person name="Jiang P.X."/>
            <person name="Jones T."/>
            <person name="Kawai J."/>
            <person name="Kamiya A."/>
            <person name="Meyers C."/>
            <person name="Nakajima M."/>
            <person name="Narusaka M."/>
            <person name="Seki M."/>
            <person name="Sakurai T."/>
            <person name="Satou M."/>
            <person name="Tamse R."/>
            <person name="Vaysberg M."/>
            <person name="Wallender E.K."/>
            <person name="Wong C."/>
            <person name="Yamamura Y."/>
            <person name="Yuan S."/>
            <person name="Shinozaki K."/>
            <person name="Davis R.W."/>
            <person name="Theologis A."/>
            <person name="Ecker J.R."/>
        </authorList>
    </citation>
    <scope>NUCLEOTIDE SEQUENCE [LARGE SCALE MRNA] (ISOFORM 1)</scope>
    <source>
        <strain>cv. Columbia</strain>
    </source>
</reference>
<reference key="4">
    <citation type="journal article" date="2004" name="Genome Res.">
        <title>Whole genome sequence comparisons and 'full-length' cDNA sequences: a combined approach to evaluate and improve Arabidopsis genome annotation.</title>
        <authorList>
            <person name="Castelli V."/>
            <person name="Aury J.-M."/>
            <person name="Jaillon O."/>
            <person name="Wincker P."/>
            <person name="Clepet C."/>
            <person name="Menard M."/>
            <person name="Cruaud C."/>
            <person name="Quetier F."/>
            <person name="Scarpelli C."/>
            <person name="Schaechter V."/>
            <person name="Temple G."/>
            <person name="Caboche M."/>
            <person name="Weissenbach J."/>
            <person name="Salanoubat M."/>
        </authorList>
    </citation>
    <scope>NUCLEOTIDE SEQUENCE [LARGE SCALE MRNA] (ISOFORM 1)</scope>
    <source>
        <strain>cv. Columbia</strain>
    </source>
</reference>
<reference key="5">
    <citation type="submission" date="2005-03" db="EMBL/GenBank/DDBJ databases">
        <title>Large-scale analysis of RIKEN Arabidopsis full-length (RAFL) cDNAs.</title>
        <authorList>
            <person name="Totoki Y."/>
            <person name="Seki M."/>
            <person name="Ishida J."/>
            <person name="Nakajima M."/>
            <person name="Enju A."/>
            <person name="Kamiya A."/>
            <person name="Narusaka M."/>
            <person name="Shin-i T."/>
            <person name="Nakagawa M."/>
            <person name="Sakamoto N."/>
            <person name="Oishi K."/>
            <person name="Kohara Y."/>
            <person name="Kobayashi M."/>
            <person name="Toyoda A."/>
            <person name="Sakaki Y."/>
            <person name="Sakurai T."/>
            <person name="Iida K."/>
            <person name="Akiyama K."/>
            <person name="Satou M."/>
            <person name="Toyoda T."/>
            <person name="Konagaya A."/>
            <person name="Carninci P."/>
            <person name="Kawai J."/>
            <person name="Hayashizaki Y."/>
            <person name="Shinozaki K."/>
        </authorList>
    </citation>
    <scope>NUCLEOTIDE SEQUENCE [LARGE SCALE MRNA] OF 175-718 (ISOFORMS 1/2)</scope>
    <source>
        <strain>cv. Columbia</strain>
    </source>
</reference>
<reference key="6">
    <citation type="journal article" date="2005" name="Plant J.">
        <title>Regulation of plant defense responses in Arabidopsis by EDR2, a PH and START domain-containing protein.</title>
        <authorList>
            <person name="Tang D."/>
            <person name="Ade J."/>
            <person name="Frye C.A."/>
            <person name="Innes R.W."/>
        </authorList>
    </citation>
    <scope>FUNCTION</scope>
    <scope>DISRUPTION PHENOTYPE</scope>
    <scope>TISSUE SPECIFICITY</scope>
    <source>
        <strain>cv. Columbia</strain>
    </source>
</reference>
<reference key="7">
    <citation type="journal article" date="2007" name="BMC Plant Biol.">
        <title>EDR2 negatively regulates salicylic acid-based defenses and cell death during powdery mildew infections of Arabidopsis thaliana.</title>
        <authorList>
            <person name="Vorwerk S."/>
            <person name="Schiff C."/>
            <person name="Santamaria M."/>
            <person name="Koh S."/>
            <person name="Nishimura M."/>
            <person name="Vogel J."/>
            <person name="Somerville C."/>
            <person name="Somerville S."/>
        </authorList>
    </citation>
    <scope>FUNCTION</scope>
    <scope>DISRUPTION PHENOTYPE</scope>
    <scope>SUBCELLULAR LOCATION</scope>
    <scope>PLECKSTRIN HOMOLOGY DOMAIN</scope>
    <source>
        <strain>cv. Columbia</strain>
    </source>
</reference>
<accession>F4JSE7</accession>
<accession>B3H6R3</accession>
<accession>F4JSE6</accession>
<accession>O49417</accession>
<accession>Q56W91</accession>
<evidence type="ECO:0000255" key="1"/>
<evidence type="ECO:0000255" key="2">
    <source>
        <dbReference type="PROSITE-ProRule" id="PRU00145"/>
    </source>
</evidence>
<evidence type="ECO:0000255" key="3">
    <source>
        <dbReference type="PROSITE-ProRule" id="PRU00197"/>
    </source>
</evidence>
<evidence type="ECO:0000256" key="4">
    <source>
        <dbReference type="SAM" id="MobiDB-lite"/>
    </source>
</evidence>
<evidence type="ECO:0000269" key="5">
    <source>
    </source>
</evidence>
<evidence type="ECO:0000269" key="6">
    <source>
    </source>
</evidence>
<evidence type="ECO:0000305" key="7"/>